<dbReference type="EMBL" id="BA000052">
    <property type="protein sequence ID" value="BAE60786.1"/>
    <property type="status" value="ALT_INIT"/>
    <property type="molecule type" value="Genomic_DNA"/>
</dbReference>
<dbReference type="STRING" id="510516.Q2UCC9"/>
<dbReference type="EnsemblFungi" id="BAE60786">
    <property type="protein sequence ID" value="BAE60786"/>
    <property type="gene ID" value="AO090012000643"/>
</dbReference>
<dbReference type="Proteomes" id="UP000006564">
    <property type="component" value="Chromosome 4"/>
</dbReference>
<dbReference type="GO" id="GO:0005881">
    <property type="term" value="C:cytoplasmic microtubule"/>
    <property type="evidence" value="ECO:0007669"/>
    <property type="project" value="TreeGrafter"/>
</dbReference>
<dbReference type="GO" id="GO:0005815">
    <property type="term" value="C:microtubule organizing center"/>
    <property type="evidence" value="ECO:0007669"/>
    <property type="project" value="TreeGrafter"/>
</dbReference>
<dbReference type="GO" id="GO:1990023">
    <property type="term" value="C:mitotic spindle midzone"/>
    <property type="evidence" value="ECO:0007669"/>
    <property type="project" value="TreeGrafter"/>
</dbReference>
<dbReference type="GO" id="GO:0005634">
    <property type="term" value="C:nucleus"/>
    <property type="evidence" value="ECO:0007669"/>
    <property type="project" value="UniProtKB-SubCell"/>
</dbReference>
<dbReference type="GO" id="GO:0005876">
    <property type="term" value="C:spindle microtubule"/>
    <property type="evidence" value="ECO:0007669"/>
    <property type="project" value="TreeGrafter"/>
</dbReference>
<dbReference type="GO" id="GO:0008017">
    <property type="term" value="F:microtubule binding"/>
    <property type="evidence" value="ECO:0007669"/>
    <property type="project" value="TreeGrafter"/>
</dbReference>
<dbReference type="GO" id="GO:0060172">
    <property type="term" value="P:astral microtubule depolymerization"/>
    <property type="evidence" value="ECO:0007669"/>
    <property type="project" value="TreeGrafter"/>
</dbReference>
<dbReference type="GO" id="GO:0051301">
    <property type="term" value="P:cell division"/>
    <property type="evidence" value="ECO:0007669"/>
    <property type="project" value="UniProtKB-KW"/>
</dbReference>
<dbReference type="GO" id="GO:0090307">
    <property type="term" value="P:mitotic spindle assembly"/>
    <property type="evidence" value="ECO:0007669"/>
    <property type="project" value="TreeGrafter"/>
</dbReference>
<dbReference type="Gene3D" id="1.25.10.10">
    <property type="entry name" value="Leucine-rich Repeat Variant"/>
    <property type="match status" value="2"/>
</dbReference>
<dbReference type="InterPro" id="IPR011989">
    <property type="entry name" value="ARM-like"/>
</dbReference>
<dbReference type="InterPro" id="IPR016024">
    <property type="entry name" value="ARM-type_fold"/>
</dbReference>
<dbReference type="InterPro" id="IPR024395">
    <property type="entry name" value="CLASP_N_dom"/>
</dbReference>
<dbReference type="InterPro" id="IPR034085">
    <property type="entry name" value="TOG"/>
</dbReference>
<dbReference type="PANTHER" id="PTHR21567">
    <property type="entry name" value="CLASP"/>
    <property type="match status" value="1"/>
</dbReference>
<dbReference type="PANTHER" id="PTHR21567:SF9">
    <property type="entry name" value="CLIP-ASSOCIATING PROTEIN"/>
    <property type="match status" value="1"/>
</dbReference>
<dbReference type="Pfam" id="PF12348">
    <property type="entry name" value="CLASP_N"/>
    <property type="match status" value="2"/>
</dbReference>
<dbReference type="SMART" id="SM01349">
    <property type="entry name" value="TOG"/>
    <property type="match status" value="2"/>
</dbReference>
<dbReference type="SUPFAM" id="SSF48371">
    <property type="entry name" value="ARM repeat"/>
    <property type="match status" value="1"/>
</dbReference>
<reference key="1">
    <citation type="journal article" date="2005" name="Nature">
        <title>Genome sequencing and analysis of Aspergillus oryzae.</title>
        <authorList>
            <person name="Machida M."/>
            <person name="Asai K."/>
            <person name="Sano M."/>
            <person name="Tanaka T."/>
            <person name="Kumagai T."/>
            <person name="Terai G."/>
            <person name="Kusumoto K."/>
            <person name="Arima T."/>
            <person name="Akita O."/>
            <person name="Kashiwagi Y."/>
            <person name="Abe K."/>
            <person name="Gomi K."/>
            <person name="Horiuchi H."/>
            <person name="Kitamoto K."/>
            <person name="Kobayashi T."/>
            <person name="Takeuchi M."/>
            <person name="Denning D.W."/>
            <person name="Galagan J.E."/>
            <person name="Nierman W.C."/>
            <person name="Yu J."/>
            <person name="Archer D.B."/>
            <person name="Bennett J.W."/>
            <person name="Bhatnagar D."/>
            <person name="Cleveland T.E."/>
            <person name="Fedorova N.D."/>
            <person name="Gotoh O."/>
            <person name="Horikawa H."/>
            <person name="Hosoyama A."/>
            <person name="Ichinomiya M."/>
            <person name="Igarashi R."/>
            <person name="Iwashita K."/>
            <person name="Juvvadi P.R."/>
            <person name="Kato M."/>
            <person name="Kato Y."/>
            <person name="Kin T."/>
            <person name="Kokubun A."/>
            <person name="Maeda H."/>
            <person name="Maeyama N."/>
            <person name="Maruyama J."/>
            <person name="Nagasaki H."/>
            <person name="Nakajima T."/>
            <person name="Oda K."/>
            <person name="Okada K."/>
            <person name="Paulsen I."/>
            <person name="Sakamoto K."/>
            <person name="Sawano T."/>
            <person name="Takahashi M."/>
            <person name="Takase K."/>
            <person name="Terabayashi Y."/>
            <person name="Wortman J.R."/>
            <person name="Yamada O."/>
            <person name="Yamagata Y."/>
            <person name="Anazawa H."/>
            <person name="Hata Y."/>
            <person name="Koide Y."/>
            <person name="Komori T."/>
            <person name="Koyama Y."/>
            <person name="Minetoki T."/>
            <person name="Suharnan S."/>
            <person name="Tanaka A."/>
            <person name="Isono K."/>
            <person name="Kuhara S."/>
            <person name="Ogasawara N."/>
            <person name="Kikuchi H."/>
        </authorList>
    </citation>
    <scope>NUCLEOTIDE SEQUENCE [LARGE SCALE GENOMIC DNA]</scope>
    <source>
        <strain>ATCC 42149 / RIB 40</strain>
    </source>
</reference>
<gene>
    <name type="primary">stu1</name>
    <name type="ORF">AO090012000643</name>
</gene>
<sequence>MEGKATELLAVLKNNNLAIDVKVSHLLSIKSDIKQKNVPDNAVHLIFESLRLAITSHHAALYAAGFSTFGHFLKRLFIQDQAHIVSAYARHFCPVLLERLGDHKERVRAQAAQIFTDLWPAASADVEHYVLEVALTGKNPKAKETSLIWLSNMSRNHGLLFRSYVPSVVSCLEDADSFVRHTAKSTVVELFQGAPARAKADLTKEMTAQNVRQSIVNAVYANIGLEDHSSTARPRSRVEPRYTPCTDSHPLRSASRAEVVHQQPAAVVSSAPLRPSKEATPMVEPEPIKSRPGSSKSDKGRTIAAAPEAEKAPHMETARPSSQDGEAPQPLHAETSKQVEDLFRVLSPAFEGRESEDNWRHREKYITSLRRLTYGNAPHDFPQPFFTGIKTNLDGIFKAVNSLRTTLSTNGCLLIQDLAKIGGSRIDPMVEVIMQNLIKLCGGMKKISAQNGNVSVNDVLANVTYTPRLLQHVTSACQDKNAQLRLFAAGWLKTLLNKQSHHKSSLEHGGGLALLEKSLKRGLTDANPGIREAMRGAFWTFHQMWPARGNNILSDLDNKTRHLLEKDPANPNRDQSSYLSSDTLTVPSRSALKEAIAAHKKARLAPAKTLPPRPESAQSSFSETKVSDPPAKSTGRTARAPLSSLSSAPMRPGAKPRRPELARPATADPYSSRKTAATDAVHIDSSPRPRRVANLGQAPSSTKSKPKKLDIPMTMAVDPVAPSASNENETQVATQVASKVRKRSSLSEQFAAIKRDDRDINALSELSINKTEHPHEIAVGESSNNEAGRHDDHAPCEISFDKLDRHDENKLSESPTPGPDHHDENALGELSINVPDRRDETALGELSINKPQRRDENALGELSINKLDRRDENTPSKSPPSEQDRRVEKTIDSAEHTSQAQRRVEESEPYFARFKIRSRLSNKRRNISPHSEHLENAKEMVRVAGQRIRSRSFDLFAYRKLQDLIHYHGEKLFTRPVFDDLLDGLLVELRKEPSPDRKHNGDYADVKTQVVGTLRLLEKSCPNLFVIDYDAIDAIFHARRYFETNSWIVQELQQTALEWFRNCEPSKLEGMLDTLVQYVQRETRDEPGYRSILMALSLLTDLIGDANKKGAWFSNEILEQVGTIAARDILAEDTDIRKKSIELCVQLYVMSTNLYQDKGVSFWRLVKAPEGGTRQLIMYYIARQ</sequence>
<organism>
    <name type="scientific">Aspergillus oryzae (strain ATCC 42149 / RIB 40)</name>
    <name type="common">Yellow koji mold</name>
    <dbReference type="NCBI Taxonomy" id="510516"/>
    <lineage>
        <taxon>Eukaryota</taxon>
        <taxon>Fungi</taxon>
        <taxon>Dikarya</taxon>
        <taxon>Ascomycota</taxon>
        <taxon>Pezizomycotina</taxon>
        <taxon>Eurotiomycetes</taxon>
        <taxon>Eurotiomycetidae</taxon>
        <taxon>Eurotiales</taxon>
        <taxon>Aspergillaceae</taxon>
        <taxon>Aspergillus</taxon>
        <taxon>Aspergillus subgen. Circumdati</taxon>
    </lineage>
</organism>
<comment type="function">
    <text evidence="1">Microtubule binding protein that promotes the stabilization of dynamic microtubules. Required for mitotic spindle formation (By similarity).</text>
</comment>
<comment type="subunit">
    <text evidence="1">Interacts with microtubules.</text>
</comment>
<comment type="subcellular location">
    <subcellularLocation>
        <location evidence="1">Cytoplasm</location>
        <location evidence="1">Cytoskeleton</location>
    </subcellularLocation>
    <subcellularLocation>
        <location evidence="1">Nucleus</location>
    </subcellularLocation>
    <subcellularLocation>
        <location evidence="1">Cytoplasm</location>
        <location evidence="1">Cytoskeleton</location>
        <location evidence="1">Spindle</location>
    </subcellularLocation>
</comment>
<comment type="similarity">
    <text evidence="3">Belongs to the CLASP family.</text>
</comment>
<comment type="sequence caution" evidence="3">
    <conflict type="erroneous initiation">
        <sequence resource="EMBL-CDS" id="BAE60786"/>
    </conflict>
</comment>
<keyword id="KW-0131">Cell cycle</keyword>
<keyword id="KW-0132">Cell division</keyword>
<keyword id="KW-0963">Cytoplasm</keyword>
<keyword id="KW-0206">Cytoskeleton</keyword>
<keyword id="KW-0493">Microtubule</keyword>
<keyword id="KW-0498">Mitosis</keyword>
<keyword id="KW-0539">Nucleus</keyword>
<keyword id="KW-1185">Reference proteome</keyword>
<keyword id="KW-0677">Repeat</keyword>
<proteinExistence type="inferred from homology"/>
<feature type="chain" id="PRO_0000272283" description="Protein stu1">
    <location>
        <begin position="1"/>
        <end position="1184"/>
    </location>
</feature>
<feature type="repeat" description="HEAT 1">
    <location>
        <begin position="92"/>
        <end position="130"/>
    </location>
</feature>
<feature type="repeat" description="HEAT 2">
    <location>
        <begin position="162"/>
        <end position="194"/>
    </location>
</feature>
<feature type="repeat" description="HEAT 3">
    <location>
        <begin position="463"/>
        <end position="499"/>
    </location>
</feature>
<feature type="region of interest" description="Disordered" evidence="2">
    <location>
        <begin position="229"/>
        <end position="336"/>
    </location>
</feature>
<feature type="region of interest" description="Disordered" evidence="2">
    <location>
        <begin position="564"/>
        <end position="584"/>
    </location>
</feature>
<feature type="region of interest" description="Disordered" evidence="2">
    <location>
        <begin position="602"/>
        <end position="906"/>
    </location>
</feature>
<feature type="compositionally biased region" description="Basic and acidic residues" evidence="2">
    <location>
        <begin position="229"/>
        <end position="240"/>
    </location>
</feature>
<feature type="compositionally biased region" description="Basic and acidic residues" evidence="2">
    <location>
        <begin position="308"/>
        <end position="317"/>
    </location>
</feature>
<feature type="compositionally biased region" description="Polar residues" evidence="2">
    <location>
        <begin position="572"/>
        <end position="584"/>
    </location>
</feature>
<feature type="compositionally biased region" description="Low complexity" evidence="2">
    <location>
        <begin position="640"/>
        <end position="649"/>
    </location>
</feature>
<feature type="compositionally biased region" description="Polar residues" evidence="2">
    <location>
        <begin position="723"/>
        <end position="737"/>
    </location>
</feature>
<feature type="compositionally biased region" description="Basic and acidic residues" evidence="2">
    <location>
        <begin position="787"/>
        <end position="811"/>
    </location>
</feature>
<feature type="compositionally biased region" description="Basic and acidic residues" evidence="2">
    <location>
        <begin position="882"/>
        <end position="895"/>
    </location>
</feature>
<accession>Q2UCC9</accession>
<protein>
    <recommendedName>
        <fullName>Protein stu1</fullName>
    </recommendedName>
</protein>
<name>STU1_ASPOR</name>
<evidence type="ECO:0000250" key="1"/>
<evidence type="ECO:0000256" key="2">
    <source>
        <dbReference type="SAM" id="MobiDB-lite"/>
    </source>
</evidence>
<evidence type="ECO:0000305" key="3"/>